<sequence length="263" mass="28799">MSGKDDYYNRAKQEGYRARSAYKLQQLDDTAGLLGEGRTVVDLGAAPGGWMQVAAERIGERGTLVGVDRQTIDDLEDPEPTVEYVRGDMTEDSTKDEIREIVGESDGSGGPVDVVISDMAPNMTGQYDLDHARSVHLVRQAFEVATDLLDAGGDFCAKVFDGQDLDDLIADIEPEFEYVREVRPDASRDSSSELYLVAKHRLTGPVREGDIVEATIEDIGEEGDGIAKVENFTVFVSGVEDGETVEVRIDDVKPRYAFAEPVE</sequence>
<gene>
    <name evidence="1" type="primary">rlmE</name>
    <name evidence="1" type="synonym">rrmJ</name>
    <name type="ordered locus">rrnAC2854</name>
</gene>
<name>RLME_HALMA</name>
<accession>Q5UYP9</accession>
<keyword id="KW-0963">Cytoplasm</keyword>
<keyword id="KW-0489">Methyltransferase</keyword>
<keyword id="KW-1185">Reference proteome</keyword>
<keyword id="KW-0698">rRNA processing</keyword>
<keyword id="KW-0949">S-adenosyl-L-methionine</keyword>
<keyword id="KW-0808">Transferase</keyword>
<proteinExistence type="inferred from homology"/>
<comment type="function">
    <text evidence="1">Specifically methylates the uridine in position 2552 of 23S rRNA at the 2'-O position of the ribose in the fully assembled 50S ribosomal subunit.</text>
</comment>
<comment type="catalytic activity">
    <reaction evidence="1">
        <text>uridine(2552) in 23S rRNA + S-adenosyl-L-methionine = 2'-O-methyluridine(2552) in 23S rRNA + S-adenosyl-L-homocysteine + H(+)</text>
        <dbReference type="Rhea" id="RHEA:42720"/>
        <dbReference type="Rhea" id="RHEA-COMP:10202"/>
        <dbReference type="Rhea" id="RHEA-COMP:10203"/>
        <dbReference type="ChEBI" id="CHEBI:15378"/>
        <dbReference type="ChEBI" id="CHEBI:57856"/>
        <dbReference type="ChEBI" id="CHEBI:59789"/>
        <dbReference type="ChEBI" id="CHEBI:65315"/>
        <dbReference type="ChEBI" id="CHEBI:74478"/>
        <dbReference type="EC" id="2.1.1.166"/>
    </reaction>
</comment>
<comment type="subcellular location">
    <subcellularLocation>
        <location evidence="1">Cytoplasm</location>
    </subcellularLocation>
</comment>
<comment type="similarity">
    <text evidence="1">Belongs to the class I-like SAM-binding methyltransferase superfamily. RNA methyltransferase RlmE family.</text>
</comment>
<dbReference type="EC" id="2.1.1.166" evidence="1"/>
<dbReference type="EMBL" id="AY596297">
    <property type="protein sequence ID" value="AAV47604.1"/>
    <property type="molecule type" value="Genomic_DNA"/>
</dbReference>
<dbReference type="RefSeq" id="WP_011224472.1">
    <property type="nucleotide sequence ID" value="NZ_CP039138.1"/>
</dbReference>
<dbReference type="SMR" id="Q5UYP9"/>
<dbReference type="STRING" id="272569.rrnAC2854"/>
<dbReference type="PaxDb" id="272569-rrnAC2854"/>
<dbReference type="EnsemblBacteria" id="AAV47604">
    <property type="protein sequence ID" value="AAV47604"/>
    <property type="gene ID" value="rrnAC2854"/>
</dbReference>
<dbReference type="KEGG" id="hma:rrnAC2854"/>
<dbReference type="PATRIC" id="fig|272569.17.peg.3424"/>
<dbReference type="eggNOG" id="arCOG00079">
    <property type="taxonomic scope" value="Archaea"/>
</dbReference>
<dbReference type="HOGENOM" id="CLU_009422_4_4_2"/>
<dbReference type="Proteomes" id="UP000001169">
    <property type="component" value="Chromosome I"/>
</dbReference>
<dbReference type="GO" id="GO:0005737">
    <property type="term" value="C:cytoplasm"/>
    <property type="evidence" value="ECO:0007669"/>
    <property type="project" value="UniProtKB-SubCell"/>
</dbReference>
<dbReference type="GO" id="GO:0008650">
    <property type="term" value="F:rRNA (uridine-2'-O-)-methyltransferase activity"/>
    <property type="evidence" value="ECO:0007669"/>
    <property type="project" value="UniProtKB-UniRule"/>
</dbReference>
<dbReference type="Gene3D" id="2.40.50.140">
    <property type="entry name" value="Nucleic acid-binding proteins"/>
    <property type="match status" value="1"/>
</dbReference>
<dbReference type="Gene3D" id="3.40.50.150">
    <property type="entry name" value="Vaccinia Virus protein VP39"/>
    <property type="match status" value="1"/>
</dbReference>
<dbReference type="HAMAP" id="MF_01547">
    <property type="entry name" value="RNA_methyltr_E"/>
    <property type="match status" value="1"/>
</dbReference>
<dbReference type="InterPro" id="IPR012340">
    <property type="entry name" value="NA-bd_OB-fold"/>
</dbReference>
<dbReference type="InterPro" id="IPR050082">
    <property type="entry name" value="RNA_methyltr_RlmE"/>
</dbReference>
<dbReference type="InterPro" id="IPR002877">
    <property type="entry name" value="RNA_MeTrfase_FtsJ_dom"/>
</dbReference>
<dbReference type="InterPro" id="IPR015507">
    <property type="entry name" value="rRNA-MeTfrase_E"/>
</dbReference>
<dbReference type="InterPro" id="IPR029063">
    <property type="entry name" value="SAM-dependent_MTases_sf"/>
</dbReference>
<dbReference type="InterPro" id="IPR002792">
    <property type="entry name" value="TRAM_dom"/>
</dbReference>
<dbReference type="PANTHER" id="PTHR10920:SF13">
    <property type="entry name" value="PRE-RRNA 2'-O-RIBOSE RNA METHYLTRANSFERASE FTSJ3"/>
    <property type="match status" value="1"/>
</dbReference>
<dbReference type="PANTHER" id="PTHR10920">
    <property type="entry name" value="RIBOSOMAL RNA METHYLTRANSFERASE"/>
    <property type="match status" value="1"/>
</dbReference>
<dbReference type="Pfam" id="PF01728">
    <property type="entry name" value="FtsJ"/>
    <property type="match status" value="1"/>
</dbReference>
<dbReference type="Pfam" id="PF01938">
    <property type="entry name" value="TRAM"/>
    <property type="match status" value="1"/>
</dbReference>
<dbReference type="SUPFAM" id="SSF50249">
    <property type="entry name" value="Nucleic acid-binding proteins"/>
    <property type="match status" value="1"/>
</dbReference>
<dbReference type="SUPFAM" id="SSF53335">
    <property type="entry name" value="S-adenosyl-L-methionine-dependent methyltransferases"/>
    <property type="match status" value="1"/>
</dbReference>
<dbReference type="PROSITE" id="PS50926">
    <property type="entry name" value="TRAM"/>
    <property type="match status" value="1"/>
</dbReference>
<reference key="1">
    <citation type="journal article" date="2004" name="Genome Res.">
        <title>Genome sequence of Haloarcula marismortui: a halophilic archaeon from the Dead Sea.</title>
        <authorList>
            <person name="Baliga N.S."/>
            <person name="Bonneau R."/>
            <person name="Facciotti M.T."/>
            <person name="Pan M."/>
            <person name="Glusman G."/>
            <person name="Deutsch E.W."/>
            <person name="Shannon P."/>
            <person name="Chiu Y."/>
            <person name="Weng R.S."/>
            <person name="Gan R.R."/>
            <person name="Hung P."/>
            <person name="Date S.V."/>
            <person name="Marcotte E."/>
            <person name="Hood L."/>
            <person name="Ng W.V."/>
        </authorList>
    </citation>
    <scope>NUCLEOTIDE SEQUENCE [LARGE SCALE GENOMIC DNA]</scope>
    <source>
        <strain>ATCC 43049 / DSM 3752 / JCM 8966 / VKM B-1809</strain>
    </source>
</reference>
<feature type="chain" id="PRO_0000155564" description="Ribosomal RNA large subunit methyltransferase E">
    <location>
        <begin position="1"/>
        <end position="263"/>
    </location>
</feature>
<feature type="domain" description="TRAM" evidence="1">
    <location>
        <begin position="205"/>
        <end position="263"/>
    </location>
</feature>
<feature type="active site" description="Proton acceptor" evidence="1">
    <location>
        <position position="158"/>
    </location>
</feature>
<feature type="binding site" evidence="1">
    <location>
        <position position="48"/>
    </location>
    <ligand>
        <name>S-adenosyl-L-methionine</name>
        <dbReference type="ChEBI" id="CHEBI:59789"/>
    </ligand>
</feature>
<feature type="binding site" evidence="1">
    <location>
        <position position="50"/>
    </location>
    <ligand>
        <name>S-adenosyl-L-methionine</name>
        <dbReference type="ChEBI" id="CHEBI:59789"/>
    </ligand>
</feature>
<feature type="binding site" evidence="1">
    <location>
        <position position="68"/>
    </location>
    <ligand>
        <name>S-adenosyl-L-methionine</name>
        <dbReference type="ChEBI" id="CHEBI:59789"/>
    </ligand>
</feature>
<feature type="binding site" evidence="1">
    <location>
        <position position="88"/>
    </location>
    <ligand>
        <name>S-adenosyl-L-methionine</name>
        <dbReference type="ChEBI" id="CHEBI:59789"/>
    </ligand>
</feature>
<feature type="binding site" evidence="1">
    <location>
        <position position="118"/>
    </location>
    <ligand>
        <name>S-adenosyl-L-methionine</name>
        <dbReference type="ChEBI" id="CHEBI:59789"/>
    </ligand>
</feature>
<organism>
    <name type="scientific">Haloarcula marismortui (strain ATCC 43049 / DSM 3752 / JCM 8966 / VKM B-1809)</name>
    <name type="common">Halobacterium marismortui</name>
    <dbReference type="NCBI Taxonomy" id="272569"/>
    <lineage>
        <taxon>Archaea</taxon>
        <taxon>Methanobacteriati</taxon>
        <taxon>Methanobacteriota</taxon>
        <taxon>Stenosarchaea group</taxon>
        <taxon>Halobacteria</taxon>
        <taxon>Halobacteriales</taxon>
        <taxon>Haloarculaceae</taxon>
        <taxon>Haloarcula</taxon>
    </lineage>
</organism>
<protein>
    <recommendedName>
        <fullName evidence="1">Ribosomal RNA large subunit methyltransferase E</fullName>
        <ecNumber evidence="1">2.1.1.166</ecNumber>
    </recommendedName>
    <alternativeName>
        <fullName evidence="1">23S rRNA Um2552 methyltransferase</fullName>
    </alternativeName>
    <alternativeName>
        <fullName evidence="1">rRNA (uridine-2'-O-)-methyltransferase</fullName>
    </alternativeName>
</protein>
<evidence type="ECO:0000255" key="1">
    <source>
        <dbReference type="HAMAP-Rule" id="MF_01547"/>
    </source>
</evidence>